<name>IOLE_ERWT9</name>
<evidence type="ECO:0000255" key="1">
    <source>
        <dbReference type="HAMAP-Rule" id="MF_01672"/>
    </source>
</evidence>
<dbReference type="EC" id="4.2.1.44" evidence="1"/>
<dbReference type="EMBL" id="CU468135">
    <property type="protein sequence ID" value="CAO98332.1"/>
    <property type="molecule type" value="Genomic_DNA"/>
</dbReference>
<dbReference type="RefSeq" id="WP_012442958.1">
    <property type="nucleotide sequence ID" value="NC_010694.1"/>
</dbReference>
<dbReference type="SMR" id="B2VJP2"/>
<dbReference type="STRING" id="465817.ETA_32860"/>
<dbReference type="KEGG" id="eta:ETA_32860"/>
<dbReference type="eggNOG" id="COG1082">
    <property type="taxonomic scope" value="Bacteria"/>
</dbReference>
<dbReference type="HOGENOM" id="CLU_059523_0_0_6"/>
<dbReference type="OrthoDB" id="9804047at2"/>
<dbReference type="Proteomes" id="UP000001726">
    <property type="component" value="Chromosome"/>
</dbReference>
<dbReference type="GO" id="GO:0030145">
    <property type="term" value="F:manganese ion binding"/>
    <property type="evidence" value="ECO:0007669"/>
    <property type="project" value="UniProtKB-UniRule"/>
</dbReference>
<dbReference type="GO" id="GO:0050114">
    <property type="term" value="F:myo-inosose-2 dehydratase activity"/>
    <property type="evidence" value="ECO:0007669"/>
    <property type="project" value="UniProtKB-UniRule"/>
</dbReference>
<dbReference type="GO" id="GO:0019310">
    <property type="term" value="P:inositol catabolic process"/>
    <property type="evidence" value="ECO:0007669"/>
    <property type="project" value="UniProtKB-UniRule"/>
</dbReference>
<dbReference type="Gene3D" id="3.20.20.150">
    <property type="entry name" value="Divalent-metal-dependent TIM barrel enzymes"/>
    <property type="match status" value="1"/>
</dbReference>
<dbReference type="HAMAP" id="MF_01672">
    <property type="entry name" value="IolE"/>
    <property type="match status" value="1"/>
</dbReference>
<dbReference type="InterPro" id="IPR023952">
    <property type="entry name" value="IolE"/>
</dbReference>
<dbReference type="InterPro" id="IPR030823">
    <property type="entry name" value="IolE/MocC"/>
</dbReference>
<dbReference type="InterPro" id="IPR050312">
    <property type="entry name" value="IolE/XylAMocC-like"/>
</dbReference>
<dbReference type="InterPro" id="IPR036237">
    <property type="entry name" value="Xyl_isomerase-like_sf"/>
</dbReference>
<dbReference type="InterPro" id="IPR013022">
    <property type="entry name" value="Xyl_isomerase-like_TIM-brl"/>
</dbReference>
<dbReference type="NCBIfam" id="TIGR04379">
    <property type="entry name" value="myo_inos_iolE"/>
    <property type="match status" value="1"/>
</dbReference>
<dbReference type="PANTHER" id="PTHR12110">
    <property type="entry name" value="HYDROXYPYRUVATE ISOMERASE"/>
    <property type="match status" value="1"/>
</dbReference>
<dbReference type="PANTHER" id="PTHR12110:SF41">
    <property type="entry name" value="INOSOSE DEHYDRATASE"/>
    <property type="match status" value="1"/>
</dbReference>
<dbReference type="Pfam" id="PF01261">
    <property type="entry name" value="AP_endonuc_2"/>
    <property type="match status" value="1"/>
</dbReference>
<dbReference type="SUPFAM" id="SSF51658">
    <property type="entry name" value="Xylose isomerase-like"/>
    <property type="match status" value="1"/>
</dbReference>
<reference key="1">
    <citation type="journal article" date="2008" name="Environ. Microbiol.">
        <title>The genome of Erwinia tasmaniensis strain Et1/99, a non-pathogenic bacterium in the genus Erwinia.</title>
        <authorList>
            <person name="Kube M."/>
            <person name="Migdoll A.M."/>
            <person name="Mueller I."/>
            <person name="Kuhl H."/>
            <person name="Beck A."/>
            <person name="Reinhardt R."/>
            <person name="Geider K."/>
        </authorList>
    </citation>
    <scope>NUCLEOTIDE SEQUENCE [LARGE SCALE GENOMIC DNA]</scope>
    <source>
        <strain>DSM 17950 / CFBP 7177 / CIP 109463 / NCPPB 4357 / Et1/99</strain>
    </source>
</reference>
<gene>
    <name evidence="1" type="primary">iolE</name>
    <name type="ordered locus">ETA_32860</name>
</gene>
<sequence length="298" mass="33443">MDKNKVKLAIAPIGWTNDDMPELGKENSFQQIVSEMALAGFTGSEVGSKYPRDPAVLKPMLDIRGLEIVNAWFSTFFANGDREKTLDEFINHRDFLHAMGAKVIGCSEQSLSIQGTAKAVLEEKPHFSDEQWRLTVEGYNQLAKLAAEKGMTVGLHHHMGTAIQTCAEVDRFMAQTHDDVYLLFDTGHAYYSEGSQQAMLAMLEKHLARINHVHLKDVRDEVVAEVKAQRLSFLEGVKRGTFTVPGDGVIDFDPVFKILDDSGYRGWMVVEAEQDPARANPFEYALKARRYIRQHAGL</sequence>
<comment type="function">
    <text evidence="1">Catalyzes the dehydration of inosose (2-keto-myo-inositol, 2KMI or 2,4,6/3,5-pentahydroxycyclohexanone) to 3D-(3,5/4)-trihydroxycyclohexane-1,2-dione (D-2,3-diketo-4-deoxy-epi-inositol).</text>
</comment>
<comment type="catalytic activity">
    <reaction evidence="1">
        <text>scyllo-inosose = 3D-3,5/4-trihydroxycyclohexane-1,2-dione + H2O</text>
        <dbReference type="Rhea" id="RHEA:14065"/>
        <dbReference type="ChEBI" id="CHEBI:15377"/>
        <dbReference type="ChEBI" id="CHEBI:17811"/>
        <dbReference type="ChEBI" id="CHEBI:28446"/>
        <dbReference type="EC" id="4.2.1.44"/>
    </reaction>
</comment>
<comment type="cofactor">
    <cofactor evidence="1">
        <name>glutathione</name>
        <dbReference type="ChEBI" id="CHEBI:57925"/>
    </cofactor>
</comment>
<comment type="cofactor">
    <cofactor evidence="1">
        <name>Co(2+)</name>
        <dbReference type="ChEBI" id="CHEBI:48828"/>
    </cofactor>
    <cofactor evidence="1">
        <name>Mn(2+)</name>
        <dbReference type="ChEBI" id="CHEBI:29035"/>
    </cofactor>
</comment>
<comment type="similarity">
    <text evidence="1">Belongs to the IolE/MocC family.</text>
</comment>
<feature type="chain" id="PRO_1000187325" description="Inosose dehydratase">
    <location>
        <begin position="1"/>
        <end position="298"/>
    </location>
</feature>
<protein>
    <recommendedName>
        <fullName evidence="1">Inosose dehydratase</fullName>
        <ecNumber evidence="1">4.2.1.44</ecNumber>
    </recommendedName>
    <alternativeName>
        <fullName evidence="1">2-keto-myo-inositol dehydratase</fullName>
        <shortName evidence="1">2KMI dehydratase</shortName>
    </alternativeName>
</protein>
<accession>B2VJP2</accession>
<keyword id="KW-0170">Cobalt</keyword>
<keyword id="KW-0456">Lyase</keyword>
<keyword id="KW-0464">Manganese</keyword>
<keyword id="KW-1185">Reference proteome</keyword>
<proteinExistence type="inferred from homology"/>
<organism>
    <name type="scientific">Erwinia tasmaniensis (strain DSM 17950 / CFBP 7177 / CIP 109463 / NCPPB 4357 / Et1/99)</name>
    <dbReference type="NCBI Taxonomy" id="465817"/>
    <lineage>
        <taxon>Bacteria</taxon>
        <taxon>Pseudomonadati</taxon>
        <taxon>Pseudomonadota</taxon>
        <taxon>Gammaproteobacteria</taxon>
        <taxon>Enterobacterales</taxon>
        <taxon>Erwiniaceae</taxon>
        <taxon>Erwinia</taxon>
    </lineage>
</organism>